<protein>
    <recommendedName>
        <fullName evidence="1">Proline--tRNA ligase</fullName>
        <ecNumber evidence="1">6.1.1.15</ecNumber>
    </recommendedName>
    <alternativeName>
        <fullName evidence="1">Prolyl-tRNA synthetase</fullName>
        <shortName evidence="1">ProRS</shortName>
    </alternativeName>
</protein>
<organism>
    <name type="scientific">Clavibacter sepedonicus</name>
    <name type="common">Clavibacter michiganensis subsp. sepedonicus</name>
    <dbReference type="NCBI Taxonomy" id="31964"/>
    <lineage>
        <taxon>Bacteria</taxon>
        <taxon>Bacillati</taxon>
        <taxon>Actinomycetota</taxon>
        <taxon>Actinomycetes</taxon>
        <taxon>Micrococcales</taxon>
        <taxon>Microbacteriaceae</taxon>
        <taxon>Clavibacter</taxon>
    </lineage>
</organism>
<proteinExistence type="inferred from homology"/>
<feature type="chain" id="PRO_1000087834" description="Proline--tRNA ligase">
    <location>
        <begin position="1"/>
        <end position="590"/>
    </location>
</feature>
<accession>B0RDZ1</accession>
<evidence type="ECO:0000255" key="1">
    <source>
        <dbReference type="HAMAP-Rule" id="MF_01569"/>
    </source>
</evidence>
<name>SYP_CLASE</name>
<comment type="function">
    <text evidence="1">Catalyzes the attachment of proline to tRNA(Pro) in a two-step reaction: proline is first activated by ATP to form Pro-AMP and then transferred to the acceptor end of tRNA(Pro). As ProRS can inadvertently accommodate and process non-cognate amino acids such as alanine and cysteine, to avoid such errors it has two additional distinct editing activities against alanine. One activity is designated as 'pretransfer' editing and involves the tRNA(Pro)-independent hydrolysis of activated Ala-AMP. The other activity is designated 'posttransfer' editing and involves deacylation of mischarged Ala-tRNA(Pro). The misacylated Cys-tRNA(Pro) is not edited by ProRS.</text>
</comment>
<comment type="catalytic activity">
    <reaction evidence="1">
        <text>tRNA(Pro) + L-proline + ATP = L-prolyl-tRNA(Pro) + AMP + diphosphate</text>
        <dbReference type="Rhea" id="RHEA:14305"/>
        <dbReference type="Rhea" id="RHEA-COMP:9700"/>
        <dbReference type="Rhea" id="RHEA-COMP:9702"/>
        <dbReference type="ChEBI" id="CHEBI:30616"/>
        <dbReference type="ChEBI" id="CHEBI:33019"/>
        <dbReference type="ChEBI" id="CHEBI:60039"/>
        <dbReference type="ChEBI" id="CHEBI:78442"/>
        <dbReference type="ChEBI" id="CHEBI:78532"/>
        <dbReference type="ChEBI" id="CHEBI:456215"/>
        <dbReference type="EC" id="6.1.1.15"/>
    </reaction>
</comment>
<comment type="subunit">
    <text evidence="1">Homodimer.</text>
</comment>
<comment type="subcellular location">
    <subcellularLocation>
        <location evidence="1">Cytoplasm</location>
    </subcellularLocation>
</comment>
<comment type="domain">
    <text evidence="1">Consists of three domains: the N-terminal catalytic domain, the editing domain and the C-terminal anticodon-binding domain.</text>
</comment>
<comment type="similarity">
    <text evidence="1">Belongs to the class-II aminoacyl-tRNA synthetase family. ProS type 1 subfamily.</text>
</comment>
<gene>
    <name evidence="1" type="primary">proS</name>
    <name type="ordered locus">CMS1845</name>
</gene>
<dbReference type="EC" id="6.1.1.15" evidence="1"/>
<dbReference type="EMBL" id="AM849034">
    <property type="protein sequence ID" value="CAQ01950.1"/>
    <property type="molecule type" value="Genomic_DNA"/>
</dbReference>
<dbReference type="RefSeq" id="WP_012299189.1">
    <property type="nucleotide sequence ID" value="NZ_MZMN01000003.1"/>
</dbReference>
<dbReference type="SMR" id="B0RDZ1"/>
<dbReference type="STRING" id="31964.CMS1845"/>
<dbReference type="KEGG" id="cms:CMS1845"/>
<dbReference type="eggNOG" id="COG0442">
    <property type="taxonomic scope" value="Bacteria"/>
</dbReference>
<dbReference type="HOGENOM" id="CLU_016739_0_0_11"/>
<dbReference type="OrthoDB" id="9809052at2"/>
<dbReference type="Proteomes" id="UP000001318">
    <property type="component" value="Chromosome"/>
</dbReference>
<dbReference type="GO" id="GO:0005829">
    <property type="term" value="C:cytosol"/>
    <property type="evidence" value="ECO:0007669"/>
    <property type="project" value="TreeGrafter"/>
</dbReference>
<dbReference type="GO" id="GO:0002161">
    <property type="term" value="F:aminoacyl-tRNA deacylase activity"/>
    <property type="evidence" value="ECO:0007669"/>
    <property type="project" value="InterPro"/>
</dbReference>
<dbReference type="GO" id="GO:0005524">
    <property type="term" value="F:ATP binding"/>
    <property type="evidence" value="ECO:0007669"/>
    <property type="project" value="UniProtKB-UniRule"/>
</dbReference>
<dbReference type="GO" id="GO:0004827">
    <property type="term" value="F:proline-tRNA ligase activity"/>
    <property type="evidence" value="ECO:0007669"/>
    <property type="project" value="UniProtKB-UniRule"/>
</dbReference>
<dbReference type="GO" id="GO:0006433">
    <property type="term" value="P:prolyl-tRNA aminoacylation"/>
    <property type="evidence" value="ECO:0007669"/>
    <property type="project" value="UniProtKB-UniRule"/>
</dbReference>
<dbReference type="CDD" id="cd00861">
    <property type="entry name" value="ProRS_anticodon_short"/>
    <property type="match status" value="1"/>
</dbReference>
<dbReference type="CDD" id="cd00779">
    <property type="entry name" value="ProRS_core_prok"/>
    <property type="match status" value="1"/>
</dbReference>
<dbReference type="FunFam" id="3.30.930.10:FF:000066">
    <property type="entry name" value="Proline--tRNA ligase"/>
    <property type="match status" value="1"/>
</dbReference>
<dbReference type="Gene3D" id="3.40.50.800">
    <property type="entry name" value="Anticodon-binding domain"/>
    <property type="match status" value="1"/>
</dbReference>
<dbReference type="Gene3D" id="3.30.930.10">
    <property type="entry name" value="Bira Bifunctional Protein, Domain 2"/>
    <property type="match status" value="2"/>
</dbReference>
<dbReference type="Gene3D" id="3.90.960.10">
    <property type="entry name" value="YbaK/aminoacyl-tRNA synthetase-associated domain"/>
    <property type="match status" value="1"/>
</dbReference>
<dbReference type="HAMAP" id="MF_01569">
    <property type="entry name" value="Pro_tRNA_synth_type1"/>
    <property type="match status" value="1"/>
</dbReference>
<dbReference type="InterPro" id="IPR002314">
    <property type="entry name" value="aa-tRNA-synt_IIb"/>
</dbReference>
<dbReference type="InterPro" id="IPR006195">
    <property type="entry name" value="aa-tRNA-synth_II"/>
</dbReference>
<dbReference type="InterPro" id="IPR045864">
    <property type="entry name" value="aa-tRNA-synth_II/BPL/LPL"/>
</dbReference>
<dbReference type="InterPro" id="IPR004154">
    <property type="entry name" value="Anticodon-bd"/>
</dbReference>
<dbReference type="InterPro" id="IPR036621">
    <property type="entry name" value="Anticodon-bd_dom_sf"/>
</dbReference>
<dbReference type="InterPro" id="IPR002316">
    <property type="entry name" value="Pro-tRNA-ligase_IIa"/>
</dbReference>
<dbReference type="InterPro" id="IPR004500">
    <property type="entry name" value="Pro-tRNA-synth_IIa_bac-type"/>
</dbReference>
<dbReference type="InterPro" id="IPR023717">
    <property type="entry name" value="Pro-tRNA-Synthase_IIa_type1"/>
</dbReference>
<dbReference type="InterPro" id="IPR050062">
    <property type="entry name" value="Pro-tRNA_synthetase"/>
</dbReference>
<dbReference type="InterPro" id="IPR044140">
    <property type="entry name" value="ProRS_anticodon_short"/>
</dbReference>
<dbReference type="InterPro" id="IPR033730">
    <property type="entry name" value="ProRS_core_prok"/>
</dbReference>
<dbReference type="InterPro" id="IPR036754">
    <property type="entry name" value="YbaK/aa-tRNA-synt-asso_dom_sf"/>
</dbReference>
<dbReference type="InterPro" id="IPR007214">
    <property type="entry name" value="YbaK/aa-tRNA-synth-assoc-dom"/>
</dbReference>
<dbReference type="NCBIfam" id="NF006625">
    <property type="entry name" value="PRK09194.1"/>
    <property type="match status" value="1"/>
</dbReference>
<dbReference type="NCBIfam" id="TIGR00409">
    <property type="entry name" value="proS_fam_II"/>
    <property type="match status" value="1"/>
</dbReference>
<dbReference type="PANTHER" id="PTHR42753">
    <property type="entry name" value="MITOCHONDRIAL RIBOSOME PROTEIN L39/PROLYL-TRNA LIGASE FAMILY MEMBER"/>
    <property type="match status" value="1"/>
</dbReference>
<dbReference type="PANTHER" id="PTHR42753:SF2">
    <property type="entry name" value="PROLINE--TRNA LIGASE"/>
    <property type="match status" value="1"/>
</dbReference>
<dbReference type="Pfam" id="PF03129">
    <property type="entry name" value="HGTP_anticodon"/>
    <property type="match status" value="1"/>
</dbReference>
<dbReference type="Pfam" id="PF00587">
    <property type="entry name" value="tRNA-synt_2b"/>
    <property type="match status" value="1"/>
</dbReference>
<dbReference type="Pfam" id="PF04073">
    <property type="entry name" value="tRNA_edit"/>
    <property type="match status" value="1"/>
</dbReference>
<dbReference type="PRINTS" id="PR01046">
    <property type="entry name" value="TRNASYNTHPRO"/>
</dbReference>
<dbReference type="SUPFAM" id="SSF52954">
    <property type="entry name" value="Class II aaRS ABD-related"/>
    <property type="match status" value="1"/>
</dbReference>
<dbReference type="SUPFAM" id="SSF55681">
    <property type="entry name" value="Class II aaRS and biotin synthetases"/>
    <property type="match status" value="1"/>
</dbReference>
<dbReference type="SUPFAM" id="SSF55826">
    <property type="entry name" value="YbaK/ProRS associated domain"/>
    <property type="match status" value="1"/>
</dbReference>
<dbReference type="PROSITE" id="PS50862">
    <property type="entry name" value="AA_TRNA_LIGASE_II"/>
    <property type="match status" value="1"/>
</dbReference>
<keyword id="KW-0030">Aminoacyl-tRNA synthetase</keyword>
<keyword id="KW-0067">ATP-binding</keyword>
<keyword id="KW-0963">Cytoplasm</keyword>
<keyword id="KW-0436">Ligase</keyword>
<keyword id="KW-0547">Nucleotide-binding</keyword>
<keyword id="KW-0648">Protein biosynthesis</keyword>
<sequence>MSTRLSKLFVRTLREDPVDAEVASHRLLVRAGYIRRQAPGIFAWLPLGLRVKNKVEAIVREEMERIGAQEVHFPALLPAEPYQATGRYDEYGPGMFRLEDRKRAPMVLAPTHEEFFALLVKDLYSSYKDLPLSIYQIQDKYRDEARPRAGILRGREFTMKDAYSFDHTDAGLAVSYQAQRDAYERIFQRLGLEYVIVAADAGAMGGSKSEEFLHPTPIGEDTFVRSPGGYAANVEAFTTLVPESIPIEGQPAARVFDSPDTPTIQTLVDLANAREPREDGRAWTAADTLKNIVLALTHLDGTRELVVVGIPGDRDIDLKRAEVAFFPAEVEAANDGDLAKNPGLVKGYIGPWSPEGPVLGSTSSTKVRYVVDPRVVDGSSWITGANVAGKHVLSLVAGRDFTPDGVVEAADVRDGDPAPDGSGPISTARGTEIGHVFELGRKYAEALGLKVLDENGKLVTVTMGSYGIGITRNLALVAEATQDGRGLLWPASISPFDVHVVMTGKDPAVGTAAEELVDALDAAGLDVLFDDRPKVSPGVKFGDAELIGVPTVVIVGRGAVDGMAELWDRRTNERTPVALADVAGALTAAR</sequence>
<reference key="1">
    <citation type="journal article" date="2008" name="J. Bacteriol.">
        <title>Genome of the actinomycete plant pathogen Clavibacter michiganensis subsp. sepedonicus suggests recent niche adaptation.</title>
        <authorList>
            <person name="Bentley S.D."/>
            <person name="Corton C."/>
            <person name="Brown S.E."/>
            <person name="Barron A."/>
            <person name="Clark L."/>
            <person name="Doggett J."/>
            <person name="Harris B."/>
            <person name="Ormond D."/>
            <person name="Quail M.A."/>
            <person name="May G."/>
            <person name="Francis D."/>
            <person name="Knudson D."/>
            <person name="Parkhill J."/>
            <person name="Ishimaru C.A."/>
        </authorList>
    </citation>
    <scope>NUCLEOTIDE SEQUENCE [LARGE SCALE GENOMIC DNA]</scope>
    <source>
        <strain>ATCC 33113 / DSM 20744 / JCM 9667 / LMG 2889 / ICMP 2535 / C-1</strain>
    </source>
</reference>